<gene>
    <name evidence="1" type="primary">mtnN</name>
    <name type="ordered locus">SPAB_00265</name>
</gene>
<accession>A9N0Q5</accession>
<comment type="function">
    <text evidence="1">Catalyzes the irreversible cleavage of the glycosidic bond in both 5'-methylthioadenosine (MTA) and S-adenosylhomocysteine (SAH/AdoHcy) to adenine and the corresponding thioribose, 5'-methylthioribose and S-ribosylhomocysteine, respectively. Also cleaves 5'-deoxyadenosine, a toxic by-product of radical S-adenosylmethionine (SAM) enzymes, into 5-deoxyribose and adenine. Thus, is required for in vivo function of the radical SAM enzymes biotin synthase and lipoic acid synthase, that are inhibited by 5'-deoxyadenosine accumulation.</text>
</comment>
<comment type="catalytic activity">
    <reaction evidence="1">
        <text>S-adenosyl-L-homocysteine + H2O = S-(5-deoxy-D-ribos-5-yl)-L-homocysteine + adenine</text>
        <dbReference type="Rhea" id="RHEA:17805"/>
        <dbReference type="ChEBI" id="CHEBI:15377"/>
        <dbReference type="ChEBI" id="CHEBI:16708"/>
        <dbReference type="ChEBI" id="CHEBI:57856"/>
        <dbReference type="ChEBI" id="CHEBI:58195"/>
        <dbReference type="EC" id="3.2.2.9"/>
    </reaction>
</comment>
<comment type="catalytic activity">
    <reaction evidence="1">
        <text>S-methyl-5'-thioadenosine + H2O = 5-(methylsulfanyl)-D-ribose + adenine</text>
        <dbReference type="Rhea" id="RHEA:13617"/>
        <dbReference type="ChEBI" id="CHEBI:15377"/>
        <dbReference type="ChEBI" id="CHEBI:16708"/>
        <dbReference type="ChEBI" id="CHEBI:17509"/>
        <dbReference type="ChEBI" id="CHEBI:78440"/>
        <dbReference type="EC" id="3.2.2.9"/>
    </reaction>
</comment>
<comment type="catalytic activity">
    <reaction evidence="1">
        <text>5'-deoxyadenosine + H2O = 5-deoxy-D-ribose + adenine</text>
        <dbReference type="Rhea" id="RHEA:29859"/>
        <dbReference type="ChEBI" id="CHEBI:15377"/>
        <dbReference type="ChEBI" id="CHEBI:16708"/>
        <dbReference type="ChEBI" id="CHEBI:17319"/>
        <dbReference type="ChEBI" id="CHEBI:149540"/>
        <dbReference type="EC" id="3.2.2.9"/>
    </reaction>
    <physiologicalReaction direction="left-to-right" evidence="1">
        <dbReference type="Rhea" id="RHEA:29860"/>
    </physiologicalReaction>
</comment>
<comment type="pathway">
    <text evidence="1">Amino-acid biosynthesis; L-methionine biosynthesis via salvage pathway; S-methyl-5-thio-alpha-D-ribose 1-phosphate from S-methyl-5'-thioadenosine (hydrolase route): step 1/2.</text>
</comment>
<comment type="subunit">
    <text evidence="1">Homodimer.</text>
</comment>
<comment type="similarity">
    <text evidence="1">Belongs to the PNP/UDP phosphorylase family. MtnN subfamily.</text>
</comment>
<reference key="1">
    <citation type="submission" date="2007-11" db="EMBL/GenBank/DDBJ databases">
        <authorList>
            <consortium name="The Salmonella enterica serovar Paratyphi B Genome Sequencing Project"/>
            <person name="McClelland M."/>
            <person name="Sanderson E.K."/>
            <person name="Porwollik S."/>
            <person name="Spieth J."/>
            <person name="Clifton W.S."/>
            <person name="Fulton R."/>
            <person name="Cordes M."/>
            <person name="Wollam A."/>
            <person name="Shah N."/>
            <person name="Pepin K."/>
            <person name="Bhonagiri V."/>
            <person name="Nash W."/>
            <person name="Johnson M."/>
            <person name="Thiruvilangam P."/>
            <person name="Wilson R."/>
        </authorList>
    </citation>
    <scope>NUCLEOTIDE SEQUENCE [LARGE SCALE GENOMIC DNA]</scope>
    <source>
        <strain>ATCC BAA-1250 / SPB7</strain>
    </source>
</reference>
<keyword id="KW-0028">Amino-acid biosynthesis</keyword>
<keyword id="KW-0378">Hydrolase</keyword>
<keyword id="KW-0486">Methionine biosynthesis</keyword>
<name>MTNN_SALPB</name>
<dbReference type="EC" id="3.2.2.9" evidence="1"/>
<dbReference type="EMBL" id="CP000886">
    <property type="protein sequence ID" value="ABX65707.1"/>
    <property type="molecule type" value="Genomic_DNA"/>
</dbReference>
<dbReference type="RefSeq" id="WP_000689821.1">
    <property type="nucleotide sequence ID" value="NC_010102.1"/>
</dbReference>
<dbReference type="SMR" id="A9N0Q5"/>
<dbReference type="KEGG" id="spq:SPAB_00265"/>
<dbReference type="PATRIC" id="fig|1016998.12.peg.257"/>
<dbReference type="HOGENOM" id="CLU_031248_2_2_6"/>
<dbReference type="BioCyc" id="SENT1016998:SPAB_RS01075-MONOMER"/>
<dbReference type="UniPathway" id="UPA00904">
    <property type="reaction ID" value="UER00871"/>
</dbReference>
<dbReference type="Proteomes" id="UP000008556">
    <property type="component" value="Chromosome"/>
</dbReference>
<dbReference type="GO" id="GO:0005829">
    <property type="term" value="C:cytosol"/>
    <property type="evidence" value="ECO:0007669"/>
    <property type="project" value="TreeGrafter"/>
</dbReference>
<dbReference type="GO" id="GO:0008782">
    <property type="term" value="F:adenosylhomocysteine nucleosidase activity"/>
    <property type="evidence" value="ECO:0007669"/>
    <property type="project" value="UniProtKB-UniRule"/>
</dbReference>
<dbReference type="GO" id="GO:0008930">
    <property type="term" value="F:methylthioadenosine nucleosidase activity"/>
    <property type="evidence" value="ECO:0007669"/>
    <property type="project" value="UniProtKB-UniRule"/>
</dbReference>
<dbReference type="GO" id="GO:0019509">
    <property type="term" value="P:L-methionine salvage from methylthioadenosine"/>
    <property type="evidence" value="ECO:0007669"/>
    <property type="project" value="UniProtKB-UniRule"/>
</dbReference>
<dbReference type="GO" id="GO:0019284">
    <property type="term" value="P:L-methionine salvage from S-adenosylmethionine"/>
    <property type="evidence" value="ECO:0007669"/>
    <property type="project" value="TreeGrafter"/>
</dbReference>
<dbReference type="GO" id="GO:0046124">
    <property type="term" value="P:purine deoxyribonucleoside catabolic process"/>
    <property type="evidence" value="ECO:0007669"/>
    <property type="project" value="UniProtKB-UniRule"/>
</dbReference>
<dbReference type="CDD" id="cd09008">
    <property type="entry name" value="MTAN"/>
    <property type="match status" value="1"/>
</dbReference>
<dbReference type="FunFam" id="3.40.50.1580:FF:000001">
    <property type="entry name" value="MTA/SAH nucleosidase family protein"/>
    <property type="match status" value="1"/>
</dbReference>
<dbReference type="Gene3D" id="3.40.50.1580">
    <property type="entry name" value="Nucleoside phosphorylase domain"/>
    <property type="match status" value="1"/>
</dbReference>
<dbReference type="HAMAP" id="MF_01684">
    <property type="entry name" value="Salvage_MtnN"/>
    <property type="match status" value="1"/>
</dbReference>
<dbReference type="InterPro" id="IPR010049">
    <property type="entry name" value="MTA_SAH_Nsdase"/>
</dbReference>
<dbReference type="InterPro" id="IPR000845">
    <property type="entry name" value="Nucleoside_phosphorylase_d"/>
</dbReference>
<dbReference type="InterPro" id="IPR035994">
    <property type="entry name" value="Nucleoside_phosphorylase_sf"/>
</dbReference>
<dbReference type="NCBIfam" id="TIGR01704">
    <property type="entry name" value="MTA_SAH-Nsdase"/>
    <property type="match status" value="1"/>
</dbReference>
<dbReference type="NCBIfam" id="NF004079">
    <property type="entry name" value="PRK05584.1"/>
    <property type="match status" value="1"/>
</dbReference>
<dbReference type="PANTHER" id="PTHR46832">
    <property type="entry name" value="5'-METHYLTHIOADENOSINE/S-ADENOSYLHOMOCYSTEINE NUCLEOSIDASE"/>
    <property type="match status" value="1"/>
</dbReference>
<dbReference type="PANTHER" id="PTHR46832:SF1">
    <property type="entry name" value="5'-METHYLTHIOADENOSINE_S-ADENOSYLHOMOCYSTEINE NUCLEOSIDASE"/>
    <property type="match status" value="1"/>
</dbReference>
<dbReference type="Pfam" id="PF01048">
    <property type="entry name" value="PNP_UDP_1"/>
    <property type="match status" value="1"/>
</dbReference>
<dbReference type="SUPFAM" id="SSF53167">
    <property type="entry name" value="Purine and uridine phosphorylases"/>
    <property type="match status" value="1"/>
</dbReference>
<evidence type="ECO:0000255" key="1">
    <source>
        <dbReference type="HAMAP-Rule" id="MF_01684"/>
    </source>
</evidence>
<sequence>MKIGIIGAMEEEVTLLRDKIDNRQTITLGGCEIYTGQLNGTEVALLKSGIGKVAAALGATLLLEHCKPDVIINTGSAGGLASTLKVGDIVVSDEARYHDADVTAFGYEYGQLPGCPAGFKADDKLIAAAESCIRELNLNAVRGLIVSGDAFINGSVGLAKIRHNFPDAVAVEMEATAIAHVCHNFNVPFVVVRAISDVADQQSHLSFDEFLAVAAKQSTLMVETLVQKLAHG</sequence>
<feature type="chain" id="PRO_0000359336" description="5'-methylthioadenosine/S-adenosylhomocysteine nucleosidase">
    <location>
        <begin position="1"/>
        <end position="232"/>
    </location>
</feature>
<feature type="active site" description="Proton acceptor" evidence="1">
    <location>
        <position position="12"/>
    </location>
</feature>
<feature type="active site" description="Proton donor" evidence="1">
    <location>
        <position position="197"/>
    </location>
</feature>
<feature type="binding site" evidence="1">
    <location>
        <position position="78"/>
    </location>
    <ligand>
        <name>substrate</name>
    </ligand>
</feature>
<feature type="binding site" evidence="1">
    <location>
        <position position="152"/>
    </location>
    <ligand>
        <name>substrate</name>
    </ligand>
</feature>
<feature type="binding site" evidence="1">
    <location>
        <begin position="173"/>
        <end position="174"/>
    </location>
    <ligand>
        <name>substrate</name>
    </ligand>
</feature>
<proteinExistence type="inferred from homology"/>
<organism>
    <name type="scientific">Salmonella paratyphi B (strain ATCC BAA-1250 / SPB7)</name>
    <dbReference type="NCBI Taxonomy" id="1016998"/>
    <lineage>
        <taxon>Bacteria</taxon>
        <taxon>Pseudomonadati</taxon>
        <taxon>Pseudomonadota</taxon>
        <taxon>Gammaproteobacteria</taxon>
        <taxon>Enterobacterales</taxon>
        <taxon>Enterobacteriaceae</taxon>
        <taxon>Salmonella</taxon>
    </lineage>
</organism>
<protein>
    <recommendedName>
        <fullName evidence="1">5'-methylthioadenosine/S-adenosylhomocysteine nucleosidase</fullName>
        <shortName evidence="1">MTA/SAH nucleosidase</shortName>
        <shortName evidence="1">MTAN</shortName>
        <ecNumber evidence="1">3.2.2.9</ecNumber>
    </recommendedName>
    <alternativeName>
        <fullName evidence="1">5'-deoxyadenosine nucleosidase</fullName>
        <shortName evidence="1">DOA nucleosidase</shortName>
        <shortName evidence="1">dAdo nucleosidase</shortName>
    </alternativeName>
    <alternativeName>
        <fullName evidence="1">5'-methylthioadenosine nucleosidase</fullName>
        <shortName evidence="1">MTA nucleosidase</shortName>
    </alternativeName>
    <alternativeName>
        <fullName evidence="1">S-adenosylhomocysteine nucleosidase</fullName>
        <shortName evidence="1">AdoHcy nucleosidase</shortName>
        <shortName evidence="1">SAH nucleosidase</shortName>
        <shortName evidence="1">SRH nucleosidase</shortName>
    </alternativeName>
</protein>